<sequence>MFHEVILNVLKNPFIALFLTLSLGYLVGKIKYKTFVLGGISGSLIIGVIIGQLNITISPDIGSLFFALFIYAGGYQGGAQFFRSLNKDTLLLLASSTITCVLGLLCVLVFAWIFQLDKGTAAGLGAGGLTQSAMIGSANNAIAMINSVSESTIHTMQTNVTVGYAVCYIFGSFGPIILLATIFPLVMKWDLRKEAIKLATEQSDGNLDLEVGQFSAFSEYTTRAYKINRDSQLLGKSLVEVYKTYKYKVVIKNIIRDNKLLTITPETTINTNDIVAITFYADLDIQSIISKDIEVTKPEQFNFIEEKRSLILTNKNLFNKTIKEVKDIIQDRNYYGVFLQKIIRSGQKLPISDDLKLRRGDEIRLIGKPEDLDKISNKIGTFISEAPITDFIFFGLGMVLGYIFGLISFNIFGISITLGAGVDCLLSGLIFGWIRSIKPQFSNLPVGASNFIRDLGLAIFVASVGITAGPQAITTIKEHGLTLFFLGIGVTIIPQVISFYISYYLLKIKNPIVLLATIAGGRSVNPGFAALLERAGNATPVIPFTSSYALANIWLTLWGPVIVALVTIIPK</sequence>
<keyword id="KW-1003">Cell membrane</keyword>
<keyword id="KW-0472">Membrane</keyword>
<keyword id="KW-1185">Reference proteome</keyword>
<keyword id="KW-0812">Transmembrane</keyword>
<keyword id="KW-1133">Transmembrane helix</keyword>
<keyword id="KW-0813">Transport</keyword>
<comment type="subcellular location">
    <subcellularLocation>
        <location evidence="2">Cell membrane</location>
        <topology evidence="2">Multi-pass membrane protein</topology>
    </subcellularLocation>
</comment>
<comment type="similarity">
    <text evidence="2">Belongs to the AAE transporter (TC 2.A.81) family.</text>
</comment>
<name>Y829_FRATT</name>
<evidence type="ECO:0000255" key="1"/>
<evidence type="ECO:0000305" key="2"/>
<gene>
    <name type="ordered locus">FTT_0829c</name>
</gene>
<feature type="chain" id="PRO_0000208773" description="Uncharacterized transporter FTT_0829c">
    <location>
        <begin position="1"/>
        <end position="571"/>
    </location>
</feature>
<feature type="transmembrane region" description="Helical" evidence="1">
    <location>
        <begin position="5"/>
        <end position="27"/>
    </location>
</feature>
<feature type="transmembrane region" description="Helical" evidence="1">
    <location>
        <begin position="34"/>
        <end position="56"/>
    </location>
</feature>
<feature type="transmembrane region" description="Helical" evidence="1">
    <location>
        <begin position="61"/>
        <end position="79"/>
    </location>
</feature>
<feature type="transmembrane region" description="Helical" evidence="1">
    <location>
        <begin position="92"/>
        <end position="114"/>
    </location>
</feature>
<feature type="transmembrane region" description="Helical" evidence="1">
    <location>
        <begin position="161"/>
        <end position="183"/>
    </location>
</feature>
<feature type="transmembrane region" description="Helical" evidence="1">
    <location>
        <begin position="391"/>
        <end position="408"/>
    </location>
</feature>
<feature type="transmembrane region" description="Helical" evidence="1">
    <location>
        <begin position="412"/>
        <end position="434"/>
    </location>
</feature>
<feature type="transmembrane region" description="Helical" evidence="1">
    <location>
        <begin position="455"/>
        <end position="474"/>
    </location>
</feature>
<feature type="transmembrane region" description="Helical" evidence="1">
    <location>
        <begin position="484"/>
        <end position="506"/>
    </location>
</feature>
<feature type="transmembrane region" description="Helical" evidence="1">
    <location>
        <begin position="513"/>
        <end position="532"/>
    </location>
</feature>
<feature type="transmembrane region" description="Helical" evidence="1">
    <location>
        <begin position="547"/>
        <end position="569"/>
    </location>
</feature>
<protein>
    <recommendedName>
        <fullName>Uncharacterized transporter FTT_0829c</fullName>
    </recommendedName>
</protein>
<organism>
    <name type="scientific">Francisella tularensis subsp. tularensis (strain SCHU S4 / Schu 4)</name>
    <dbReference type="NCBI Taxonomy" id="177416"/>
    <lineage>
        <taxon>Bacteria</taxon>
        <taxon>Pseudomonadati</taxon>
        <taxon>Pseudomonadota</taxon>
        <taxon>Gammaproteobacteria</taxon>
        <taxon>Thiotrichales</taxon>
        <taxon>Francisellaceae</taxon>
        <taxon>Francisella</taxon>
    </lineage>
</organism>
<proteinExistence type="inferred from homology"/>
<dbReference type="EMBL" id="AJ749949">
    <property type="protein sequence ID" value="CAG45462.1"/>
    <property type="molecule type" value="Genomic_DNA"/>
</dbReference>
<dbReference type="RefSeq" id="WP_003020773.1">
    <property type="nucleotide sequence ID" value="NC_006570.2"/>
</dbReference>
<dbReference type="RefSeq" id="YP_169835.1">
    <property type="nucleotide sequence ID" value="NC_006570.2"/>
</dbReference>
<dbReference type="SMR" id="Q5NGK7"/>
<dbReference type="DNASU" id="3191754"/>
<dbReference type="EnsemblBacteria" id="CAG45462">
    <property type="protein sequence ID" value="CAG45462"/>
    <property type="gene ID" value="FTT_0829c"/>
</dbReference>
<dbReference type="KEGG" id="ftu:FTT_0829c"/>
<dbReference type="eggNOG" id="COG2985">
    <property type="taxonomic scope" value="Bacteria"/>
</dbReference>
<dbReference type="OrthoDB" id="5166626at2"/>
<dbReference type="Proteomes" id="UP000001174">
    <property type="component" value="Chromosome"/>
</dbReference>
<dbReference type="GO" id="GO:0005886">
    <property type="term" value="C:plasma membrane"/>
    <property type="evidence" value="ECO:0007669"/>
    <property type="project" value="UniProtKB-SubCell"/>
</dbReference>
<dbReference type="GO" id="GO:0008324">
    <property type="term" value="F:monoatomic cation transmembrane transporter activity"/>
    <property type="evidence" value="ECO:0007669"/>
    <property type="project" value="InterPro"/>
</dbReference>
<dbReference type="GO" id="GO:0006813">
    <property type="term" value="P:potassium ion transport"/>
    <property type="evidence" value="ECO:0007669"/>
    <property type="project" value="InterPro"/>
</dbReference>
<dbReference type="Gene3D" id="3.30.70.1450">
    <property type="entry name" value="Regulator of K+ conductance, C-terminal domain"/>
    <property type="match status" value="2"/>
</dbReference>
<dbReference type="InterPro" id="IPR050144">
    <property type="entry name" value="AAE_transporter"/>
</dbReference>
<dbReference type="InterPro" id="IPR022457">
    <property type="entry name" value="Asp_Ala_antiprt"/>
</dbReference>
<dbReference type="InterPro" id="IPR006037">
    <property type="entry name" value="RCK_C"/>
</dbReference>
<dbReference type="InterPro" id="IPR036721">
    <property type="entry name" value="RCK_C_sf"/>
</dbReference>
<dbReference type="InterPro" id="IPR006512">
    <property type="entry name" value="YidE_YbjL"/>
</dbReference>
<dbReference type="NCBIfam" id="TIGR03802">
    <property type="entry name" value="Asp_Ala_antiprt"/>
    <property type="match status" value="1"/>
</dbReference>
<dbReference type="PANTHER" id="PTHR30445:SF9">
    <property type="match status" value="1"/>
</dbReference>
<dbReference type="PANTHER" id="PTHR30445">
    <property type="entry name" value="K(+)_H(+) ANTIPORTER SUBUNIT KHTT"/>
    <property type="match status" value="1"/>
</dbReference>
<dbReference type="Pfam" id="PF06826">
    <property type="entry name" value="Asp-Al_Ex"/>
    <property type="match status" value="2"/>
</dbReference>
<dbReference type="Pfam" id="PF02080">
    <property type="entry name" value="TrkA_C"/>
    <property type="match status" value="1"/>
</dbReference>
<dbReference type="SUPFAM" id="SSF116726">
    <property type="entry name" value="TrkA C-terminal domain-like"/>
    <property type="match status" value="2"/>
</dbReference>
<reference key="1">
    <citation type="journal article" date="2005" name="Nat. Genet.">
        <title>The complete genome sequence of Francisella tularensis, the causative agent of tularemia.</title>
        <authorList>
            <person name="Larsson P."/>
            <person name="Oyston P.C.F."/>
            <person name="Chain P."/>
            <person name="Chu M.C."/>
            <person name="Duffield M."/>
            <person name="Fuxelius H.-H."/>
            <person name="Garcia E."/>
            <person name="Haelltorp G."/>
            <person name="Johansson D."/>
            <person name="Isherwood K.E."/>
            <person name="Karp P.D."/>
            <person name="Larsson E."/>
            <person name="Liu Y."/>
            <person name="Michell S."/>
            <person name="Prior J."/>
            <person name="Prior R."/>
            <person name="Malfatti S."/>
            <person name="Sjoestedt A."/>
            <person name="Svensson K."/>
            <person name="Thompson N."/>
            <person name="Vergez L."/>
            <person name="Wagg J.K."/>
            <person name="Wren B.W."/>
            <person name="Lindler L.E."/>
            <person name="Andersson S.G.E."/>
            <person name="Forsman M."/>
            <person name="Titball R.W."/>
        </authorList>
    </citation>
    <scope>NUCLEOTIDE SEQUENCE [LARGE SCALE GENOMIC DNA]</scope>
    <source>
        <strain>SCHU S4 / Schu 4</strain>
    </source>
</reference>
<accession>Q5NGK7</accession>